<accession>P01689</accession>
<sequence>AFELTQTPSSVEAAVGGTVTIKCQSSQSIGTYLAWYZZKPGQPPKLLIYRASTLASGVSSRFKGSGSGTEFTLTISGVECADAATYYCQGTYYZSASFGGGTEVVVKG</sequence>
<proteinExistence type="evidence at protein level"/>
<comment type="miscellaneous">
    <text>This chain was obtained from antibody to Micrococcus lysodeikticus cell wall and was isolated from the serum of a single rabbit.</text>
</comment>
<name>KV08_RABIT</name>
<feature type="chain" id="PRO_0000059727" description="Ig kappa chain V region 120">
    <location>
        <begin position="1"/>
        <end position="108" status="greater than"/>
    </location>
</feature>
<feature type="region of interest" description="Framework-1">
    <location>
        <begin position="1"/>
        <end position="23"/>
    </location>
</feature>
<feature type="region of interest" description="Complementarity-determining-1">
    <location>
        <begin position="24"/>
        <end position="34"/>
    </location>
</feature>
<feature type="region of interest" description="Framework-2">
    <location>
        <begin position="35"/>
        <end position="49"/>
    </location>
</feature>
<feature type="region of interest" description="Complementarity-determining-2">
    <location>
        <begin position="50"/>
        <end position="56"/>
    </location>
</feature>
<feature type="region of interest" description="Framework-3">
    <location>
        <begin position="57"/>
        <end position="88"/>
    </location>
</feature>
<feature type="region of interest" description="Complementarity-determining-3">
    <location>
        <begin position="89"/>
        <end position="97"/>
    </location>
</feature>
<feature type="region of interest" description="Framework-4">
    <location>
        <begin position="98"/>
        <end position="107"/>
    </location>
</feature>
<feature type="non-terminal residue">
    <location>
        <position position="108"/>
    </location>
</feature>
<protein>
    <recommendedName>
        <fullName>Ig kappa chain V region 120</fullName>
    </recommendedName>
</protein>
<organism>
    <name type="scientific">Oryctolagus cuniculus</name>
    <name type="common">Rabbit</name>
    <dbReference type="NCBI Taxonomy" id="9986"/>
    <lineage>
        <taxon>Eukaryota</taxon>
        <taxon>Metazoa</taxon>
        <taxon>Chordata</taxon>
        <taxon>Craniata</taxon>
        <taxon>Vertebrata</taxon>
        <taxon>Euteleostomi</taxon>
        <taxon>Mammalia</taxon>
        <taxon>Eutheria</taxon>
        <taxon>Euarchontoglires</taxon>
        <taxon>Glires</taxon>
        <taxon>Lagomorpha</taxon>
        <taxon>Leporidae</taxon>
        <taxon>Oryctolagus</taxon>
    </lineage>
</organism>
<reference key="1">
    <citation type="journal article" date="1978" name="Biochemistry">
        <title>Sequence of a rabbit anti-Micrococcus lysodeikticus antibody light chain.</title>
        <authorList>
            <person name="van Hoegaerden M."/>
            <person name="Strosberg A.D."/>
        </authorList>
    </citation>
    <scope>PROTEIN SEQUENCE</scope>
</reference>
<keyword id="KW-1064">Adaptive immunity</keyword>
<keyword id="KW-0903">Direct protein sequencing</keyword>
<keyword id="KW-0391">Immunity</keyword>
<keyword id="KW-1280">Immunoglobulin</keyword>
<keyword id="KW-1185">Reference proteome</keyword>
<dbReference type="PIR" id="A01952">
    <property type="entry name" value="KVRB12"/>
</dbReference>
<dbReference type="FunCoup" id="P01689">
    <property type="interactions" value="212"/>
</dbReference>
<dbReference type="InParanoid" id="P01689"/>
<dbReference type="Proteomes" id="UP000001811">
    <property type="component" value="Unplaced"/>
</dbReference>
<dbReference type="GO" id="GO:0019814">
    <property type="term" value="C:immunoglobulin complex"/>
    <property type="evidence" value="ECO:0007669"/>
    <property type="project" value="UniProtKB-KW"/>
</dbReference>
<dbReference type="GO" id="GO:0002250">
    <property type="term" value="P:adaptive immune response"/>
    <property type="evidence" value="ECO:0007669"/>
    <property type="project" value="UniProtKB-KW"/>
</dbReference>
<dbReference type="FunFam" id="2.60.40.10:FF:000212">
    <property type="entry name" value="Immunoglobulin kappa chain variable 12-38"/>
    <property type="match status" value="1"/>
</dbReference>
<dbReference type="Gene3D" id="2.60.40.10">
    <property type="entry name" value="Immunoglobulins"/>
    <property type="match status" value="1"/>
</dbReference>
<dbReference type="InterPro" id="IPR007110">
    <property type="entry name" value="Ig-like_dom"/>
</dbReference>
<dbReference type="InterPro" id="IPR036179">
    <property type="entry name" value="Ig-like_dom_sf"/>
</dbReference>
<dbReference type="InterPro" id="IPR013783">
    <property type="entry name" value="Ig-like_fold"/>
</dbReference>
<dbReference type="InterPro" id="IPR003599">
    <property type="entry name" value="Ig_sub"/>
</dbReference>
<dbReference type="InterPro" id="IPR013106">
    <property type="entry name" value="Ig_V-set"/>
</dbReference>
<dbReference type="InterPro" id="IPR050150">
    <property type="entry name" value="IgV_Light_Chain"/>
</dbReference>
<dbReference type="PANTHER" id="PTHR23267">
    <property type="entry name" value="IMMUNOGLOBULIN LIGHT CHAIN"/>
    <property type="match status" value="1"/>
</dbReference>
<dbReference type="Pfam" id="PF07686">
    <property type="entry name" value="V-set"/>
    <property type="match status" value="1"/>
</dbReference>
<dbReference type="SMART" id="SM00409">
    <property type="entry name" value="IG"/>
    <property type="match status" value="1"/>
</dbReference>
<dbReference type="SMART" id="SM00406">
    <property type="entry name" value="IGv"/>
    <property type="match status" value="1"/>
</dbReference>
<dbReference type="SUPFAM" id="SSF48726">
    <property type="entry name" value="Immunoglobulin"/>
    <property type="match status" value="1"/>
</dbReference>
<dbReference type="PROSITE" id="PS50835">
    <property type="entry name" value="IG_LIKE"/>
    <property type="match status" value="1"/>
</dbReference>